<reference key="1">
    <citation type="journal article" date="2005" name="Science">
        <title>The transcriptional landscape of the mammalian genome.</title>
        <authorList>
            <person name="Carninci P."/>
            <person name="Kasukawa T."/>
            <person name="Katayama S."/>
            <person name="Gough J."/>
            <person name="Frith M.C."/>
            <person name="Maeda N."/>
            <person name="Oyama R."/>
            <person name="Ravasi T."/>
            <person name="Lenhard B."/>
            <person name="Wells C."/>
            <person name="Kodzius R."/>
            <person name="Shimokawa K."/>
            <person name="Bajic V.B."/>
            <person name="Brenner S.E."/>
            <person name="Batalov S."/>
            <person name="Forrest A.R."/>
            <person name="Zavolan M."/>
            <person name="Davis M.J."/>
            <person name="Wilming L.G."/>
            <person name="Aidinis V."/>
            <person name="Allen J.E."/>
            <person name="Ambesi-Impiombato A."/>
            <person name="Apweiler R."/>
            <person name="Aturaliya R.N."/>
            <person name="Bailey T.L."/>
            <person name="Bansal M."/>
            <person name="Baxter L."/>
            <person name="Beisel K.W."/>
            <person name="Bersano T."/>
            <person name="Bono H."/>
            <person name="Chalk A.M."/>
            <person name="Chiu K.P."/>
            <person name="Choudhary V."/>
            <person name="Christoffels A."/>
            <person name="Clutterbuck D.R."/>
            <person name="Crowe M.L."/>
            <person name="Dalla E."/>
            <person name="Dalrymple B.P."/>
            <person name="de Bono B."/>
            <person name="Della Gatta G."/>
            <person name="di Bernardo D."/>
            <person name="Down T."/>
            <person name="Engstrom P."/>
            <person name="Fagiolini M."/>
            <person name="Faulkner G."/>
            <person name="Fletcher C.F."/>
            <person name="Fukushima T."/>
            <person name="Furuno M."/>
            <person name="Futaki S."/>
            <person name="Gariboldi M."/>
            <person name="Georgii-Hemming P."/>
            <person name="Gingeras T.R."/>
            <person name="Gojobori T."/>
            <person name="Green R.E."/>
            <person name="Gustincich S."/>
            <person name="Harbers M."/>
            <person name="Hayashi Y."/>
            <person name="Hensch T.K."/>
            <person name="Hirokawa N."/>
            <person name="Hill D."/>
            <person name="Huminiecki L."/>
            <person name="Iacono M."/>
            <person name="Ikeo K."/>
            <person name="Iwama A."/>
            <person name="Ishikawa T."/>
            <person name="Jakt M."/>
            <person name="Kanapin A."/>
            <person name="Katoh M."/>
            <person name="Kawasawa Y."/>
            <person name="Kelso J."/>
            <person name="Kitamura H."/>
            <person name="Kitano H."/>
            <person name="Kollias G."/>
            <person name="Krishnan S.P."/>
            <person name="Kruger A."/>
            <person name="Kummerfeld S.K."/>
            <person name="Kurochkin I.V."/>
            <person name="Lareau L.F."/>
            <person name="Lazarevic D."/>
            <person name="Lipovich L."/>
            <person name="Liu J."/>
            <person name="Liuni S."/>
            <person name="McWilliam S."/>
            <person name="Madan Babu M."/>
            <person name="Madera M."/>
            <person name="Marchionni L."/>
            <person name="Matsuda H."/>
            <person name="Matsuzawa S."/>
            <person name="Miki H."/>
            <person name="Mignone F."/>
            <person name="Miyake S."/>
            <person name="Morris K."/>
            <person name="Mottagui-Tabar S."/>
            <person name="Mulder N."/>
            <person name="Nakano N."/>
            <person name="Nakauchi H."/>
            <person name="Ng P."/>
            <person name="Nilsson R."/>
            <person name="Nishiguchi S."/>
            <person name="Nishikawa S."/>
            <person name="Nori F."/>
            <person name="Ohara O."/>
            <person name="Okazaki Y."/>
            <person name="Orlando V."/>
            <person name="Pang K.C."/>
            <person name="Pavan W.J."/>
            <person name="Pavesi G."/>
            <person name="Pesole G."/>
            <person name="Petrovsky N."/>
            <person name="Piazza S."/>
            <person name="Reed J."/>
            <person name="Reid J.F."/>
            <person name="Ring B.Z."/>
            <person name="Ringwald M."/>
            <person name="Rost B."/>
            <person name="Ruan Y."/>
            <person name="Salzberg S.L."/>
            <person name="Sandelin A."/>
            <person name="Schneider C."/>
            <person name="Schoenbach C."/>
            <person name="Sekiguchi K."/>
            <person name="Semple C.A."/>
            <person name="Seno S."/>
            <person name="Sessa L."/>
            <person name="Sheng Y."/>
            <person name="Shibata Y."/>
            <person name="Shimada H."/>
            <person name="Shimada K."/>
            <person name="Silva D."/>
            <person name="Sinclair B."/>
            <person name="Sperling S."/>
            <person name="Stupka E."/>
            <person name="Sugiura K."/>
            <person name="Sultana R."/>
            <person name="Takenaka Y."/>
            <person name="Taki K."/>
            <person name="Tammoja K."/>
            <person name="Tan S.L."/>
            <person name="Tang S."/>
            <person name="Taylor M.S."/>
            <person name="Tegner J."/>
            <person name="Teichmann S.A."/>
            <person name="Ueda H.R."/>
            <person name="van Nimwegen E."/>
            <person name="Verardo R."/>
            <person name="Wei C.L."/>
            <person name="Yagi K."/>
            <person name="Yamanishi H."/>
            <person name="Zabarovsky E."/>
            <person name="Zhu S."/>
            <person name="Zimmer A."/>
            <person name="Hide W."/>
            <person name="Bult C."/>
            <person name="Grimmond S.M."/>
            <person name="Teasdale R.D."/>
            <person name="Liu E.T."/>
            <person name="Brusic V."/>
            <person name="Quackenbush J."/>
            <person name="Wahlestedt C."/>
            <person name="Mattick J.S."/>
            <person name="Hume D.A."/>
            <person name="Kai C."/>
            <person name="Sasaki D."/>
            <person name="Tomaru Y."/>
            <person name="Fukuda S."/>
            <person name="Kanamori-Katayama M."/>
            <person name="Suzuki M."/>
            <person name="Aoki J."/>
            <person name="Arakawa T."/>
            <person name="Iida J."/>
            <person name="Imamura K."/>
            <person name="Itoh M."/>
            <person name="Kato T."/>
            <person name="Kawaji H."/>
            <person name="Kawagashira N."/>
            <person name="Kawashima T."/>
            <person name="Kojima M."/>
            <person name="Kondo S."/>
            <person name="Konno H."/>
            <person name="Nakano K."/>
            <person name="Ninomiya N."/>
            <person name="Nishio T."/>
            <person name="Okada M."/>
            <person name="Plessy C."/>
            <person name="Shibata K."/>
            <person name="Shiraki T."/>
            <person name="Suzuki S."/>
            <person name="Tagami M."/>
            <person name="Waki K."/>
            <person name="Watahiki A."/>
            <person name="Okamura-Oho Y."/>
            <person name="Suzuki H."/>
            <person name="Kawai J."/>
            <person name="Hayashizaki Y."/>
        </authorList>
    </citation>
    <scope>NUCLEOTIDE SEQUENCE [LARGE SCALE MRNA] (ISOFORM 1)</scope>
    <source>
        <strain>C57BL/6J</strain>
        <tissue>Head</tissue>
    </source>
</reference>
<reference key="2">
    <citation type="journal article" date="2004" name="Genome Res.">
        <title>The status, quality, and expansion of the NIH full-length cDNA project: the Mammalian Gene Collection (MGC).</title>
        <authorList>
            <consortium name="The MGC Project Team"/>
        </authorList>
    </citation>
    <scope>NUCLEOTIDE SEQUENCE [LARGE SCALE MRNA] (ISOFORMS 1 AND 2)</scope>
    <source>
        <strain>129</strain>
        <strain>Czech II</strain>
        <strain>NMRI</strain>
        <tissue>Mammary tumor</tissue>
    </source>
</reference>
<reference key="3">
    <citation type="journal article" date="2007" name="Proc. Natl. Acad. Sci. U.S.A.">
        <title>Large-scale phosphorylation analysis of mouse liver.</title>
        <authorList>
            <person name="Villen J."/>
            <person name="Beausoleil S.A."/>
            <person name="Gerber S.A."/>
            <person name="Gygi S.P."/>
        </authorList>
    </citation>
    <scope>IDENTIFICATION BY MASS SPECTROMETRY [LARGE SCALE ANALYSIS]</scope>
    <source>
        <tissue>Liver</tissue>
    </source>
</reference>
<reference key="4">
    <citation type="journal article" date="2010" name="Cell">
        <title>A tissue-specific atlas of mouse protein phosphorylation and expression.</title>
        <authorList>
            <person name="Huttlin E.L."/>
            <person name="Jedrychowski M.P."/>
            <person name="Elias J.E."/>
            <person name="Goswami T."/>
            <person name="Rad R."/>
            <person name="Beausoleil S.A."/>
            <person name="Villen J."/>
            <person name="Haas W."/>
            <person name="Sowa M.E."/>
            <person name="Gygi S.P."/>
        </authorList>
    </citation>
    <scope>PHOSPHORYLATION [LARGE SCALE ANALYSIS] AT SER-46 AND SER-253</scope>
    <scope>IDENTIFICATION BY MASS SPECTROMETRY [LARGE SCALE ANALYSIS]</scope>
    <source>
        <tissue>Brown adipose tissue</tissue>
        <tissue>Kidney</tissue>
        <tissue>Lung</tissue>
    </source>
</reference>
<reference key="5">
    <citation type="journal article" date="2016" name="BMB Rep.">
        <title>Expression and characterization of transmembrane and coiled-coil domain family 3.</title>
        <authorList>
            <person name="Sohn W.J."/>
            <person name="Kim J.Y."/>
            <person name="Kim D."/>
            <person name="Park J.A."/>
            <person name="Lee Y."/>
            <person name="Kwon H.J."/>
        </authorList>
    </citation>
    <scope>DEVELOPMENTAL STAGE</scope>
</reference>
<dbReference type="EMBL" id="AK132545">
    <property type="protein sequence ID" value="BAE21229.1"/>
    <property type="molecule type" value="mRNA"/>
</dbReference>
<dbReference type="EMBL" id="BC026867">
    <property type="protein sequence ID" value="AAH26867.1"/>
    <property type="molecule type" value="mRNA"/>
</dbReference>
<dbReference type="EMBL" id="BC057202">
    <property type="protein sequence ID" value="AAH57202.1"/>
    <property type="molecule type" value="mRNA"/>
</dbReference>
<dbReference type="EMBL" id="BC095951">
    <property type="protein sequence ID" value="AAH95951.1"/>
    <property type="molecule type" value="mRNA"/>
</dbReference>
<dbReference type="CCDS" id="CCDS24134.1">
    <molecule id="Q8R310-1"/>
</dbReference>
<dbReference type="CCDS" id="CCDS48675.1">
    <molecule id="Q8R310-2"/>
</dbReference>
<dbReference type="RefSeq" id="NP_001162155.1">
    <molecule id="Q8R310-2"/>
    <property type="nucleotide sequence ID" value="NM_001168684.1"/>
</dbReference>
<dbReference type="RefSeq" id="NP_001346689.1">
    <molecule id="Q8R310-2"/>
    <property type="nucleotide sequence ID" value="NM_001359760.1"/>
</dbReference>
<dbReference type="RefSeq" id="NP_001346690.1">
    <molecule id="Q8R310-2"/>
    <property type="nucleotide sequence ID" value="NM_001359761.1"/>
</dbReference>
<dbReference type="RefSeq" id="NP_742048.2">
    <molecule id="Q8R310-1"/>
    <property type="nucleotide sequence ID" value="NM_172051.3"/>
</dbReference>
<dbReference type="RefSeq" id="NP_796000.1">
    <molecule id="Q8R310-2"/>
    <property type="nucleotide sequence ID" value="NM_177026.1"/>
</dbReference>
<dbReference type="RefSeq" id="XP_006513815.1">
    <property type="nucleotide sequence ID" value="XM_006513752.1"/>
</dbReference>
<dbReference type="RefSeq" id="XP_006513816.1">
    <property type="nucleotide sequence ID" value="XM_006513753.1"/>
</dbReference>
<dbReference type="RefSeq" id="XP_006513817.1">
    <molecule id="Q8R310-2"/>
    <property type="nucleotide sequence ID" value="XM_006513754.5"/>
</dbReference>
<dbReference type="SMR" id="Q8R310"/>
<dbReference type="BioGRID" id="235592">
    <property type="interactions" value="1"/>
</dbReference>
<dbReference type="FunCoup" id="Q8R310">
    <property type="interactions" value="1732"/>
</dbReference>
<dbReference type="STRING" id="10090.ENSMUSP00000063264"/>
<dbReference type="iPTMnet" id="Q8R310"/>
<dbReference type="PhosphoSitePlus" id="Q8R310"/>
<dbReference type="jPOST" id="Q8R310"/>
<dbReference type="PaxDb" id="10090-ENSMUSP00000063264"/>
<dbReference type="PeptideAtlas" id="Q8R310"/>
<dbReference type="ProteomicsDB" id="259125">
    <molecule id="Q8R310-1"/>
</dbReference>
<dbReference type="ProteomicsDB" id="259126">
    <molecule id="Q8R310-2"/>
</dbReference>
<dbReference type="Antibodypedia" id="2821">
    <property type="antibodies" value="90 antibodies from 19 providers"/>
</dbReference>
<dbReference type="DNASU" id="319880"/>
<dbReference type="Ensembl" id="ENSMUST00000065060.12">
    <molecule id="Q8R310-1"/>
    <property type="protein sequence ID" value="ENSMUSP00000063264.6"/>
    <property type="gene ID" value="ENSMUSG00000020023.19"/>
</dbReference>
<dbReference type="Ensembl" id="ENSMUST00000117460.8">
    <molecule id="Q8R310-2"/>
    <property type="protein sequence ID" value="ENSMUSP00000112669.2"/>
    <property type="gene ID" value="ENSMUSG00000020023.19"/>
</dbReference>
<dbReference type="Ensembl" id="ENSMUST00000117929.2">
    <molecule id="Q8R310-2"/>
    <property type="protein sequence ID" value="ENSMUSP00000112401.2"/>
    <property type="gene ID" value="ENSMUSG00000020023.19"/>
</dbReference>
<dbReference type="Ensembl" id="ENSMUST00000121471.8">
    <molecule id="Q8R310-2"/>
    <property type="protein sequence ID" value="ENSMUSP00000113122.2"/>
    <property type="gene ID" value="ENSMUSG00000020023.19"/>
</dbReference>
<dbReference type="GeneID" id="319880"/>
<dbReference type="KEGG" id="mmu:319880"/>
<dbReference type="UCSC" id="uc007gvt.2">
    <molecule id="Q8R310-1"/>
    <property type="organism name" value="mouse"/>
</dbReference>
<dbReference type="AGR" id="MGI:2442900"/>
<dbReference type="CTD" id="57458"/>
<dbReference type="MGI" id="MGI:2442900">
    <property type="gene designation" value="Tmcc3"/>
</dbReference>
<dbReference type="VEuPathDB" id="HostDB:ENSMUSG00000020023"/>
<dbReference type="eggNOG" id="KOG3850">
    <property type="taxonomic scope" value="Eukaryota"/>
</dbReference>
<dbReference type="GeneTree" id="ENSGT00940000157275"/>
<dbReference type="HOGENOM" id="CLU_019951_0_0_1"/>
<dbReference type="InParanoid" id="Q8R310"/>
<dbReference type="OMA" id="APHGMES"/>
<dbReference type="OrthoDB" id="10072335at2759"/>
<dbReference type="PhylomeDB" id="Q8R310"/>
<dbReference type="TreeFam" id="TF316292"/>
<dbReference type="BioGRID-ORCS" id="319880">
    <property type="hits" value="1 hit in 77 CRISPR screens"/>
</dbReference>
<dbReference type="ChiTaRS" id="Tmcc3">
    <property type="organism name" value="mouse"/>
</dbReference>
<dbReference type="PRO" id="PR:Q8R310"/>
<dbReference type="Proteomes" id="UP000000589">
    <property type="component" value="Chromosome 10"/>
</dbReference>
<dbReference type="RNAct" id="Q8R310">
    <property type="molecule type" value="protein"/>
</dbReference>
<dbReference type="Bgee" id="ENSMUSG00000020023">
    <property type="expression patterns" value="Expressed in placenta labyrinth and 246 other cell types or tissues"/>
</dbReference>
<dbReference type="ExpressionAtlas" id="Q8R310">
    <property type="expression patterns" value="baseline and differential"/>
</dbReference>
<dbReference type="GO" id="GO:0005783">
    <property type="term" value="C:endoplasmic reticulum"/>
    <property type="evidence" value="ECO:0000266"/>
    <property type="project" value="MGI"/>
</dbReference>
<dbReference type="GO" id="GO:0005789">
    <property type="term" value="C:endoplasmic reticulum membrane"/>
    <property type="evidence" value="ECO:0007669"/>
    <property type="project" value="UniProtKB-SubCell"/>
</dbReference>
<dbReference type="GO" id="GO:0071889">
    <property type="term" value="F:14-3-3 protein binding"/>
    <property type="evidence" value="ECO:0000266"/>
    <property type="project" value="MGI"/>
</dbReference>
<dbReference type="GO" id="GO:0042802">
    <property type="term" value="F:identical protein binding"/>
    <property type="evidence" value="ECO:0000266"/>
    <property type="project" value="MGI"/>
</dbReference>
<dbReference type="InterPro" id="IPR019394">
    <property type="entry name" value="TEX28/TMCC"/>
</dbReference>
<dbReference type="PANTHER" id="PTHR17613">
    <property type="entry name" value="CEREBRAL PROTEIN-11-RELATED"/>
    <property type="match status" value="1"/>
</dbReference>
<dbReference type="PANTHER" id="PTHR17613:SF8">
    <property type="entry name" value="TRANSMEMBRANE AND COILED-COIL DOMAIN PROTEIN 3"/>
    <property type="match status" value="1"/>
</dbReference>
<dbReference type="Pfam" id="PF10267">
    <property type="entry name" value="Tmemb_cc2"/>
    <property type="match status" value="1"/>
</dbReference>
<keyword id="KW-0025">Alternative splicing</keyword>
<keyword id="KW-0175">Coiled coil</keyword>
<keyword id="KW-0256">Endoplasmic reticulum</keyword>
<keyword id="KW-0472">Membrane</keyword>
<keyword id="KW-0597">Phosphoprotein</keyword>
<keyword id="KW-1185">Reference proteome</keyword>
<keyword id="KW-0812">Transmembrane</keyword>
<keyword id="KW-1133">Transmembrane helix</keyword>
<protein>
    <recommendedName>
        <fullName evidence="1">Transmembrane and coiled-coil domain protein 3</fullName>
    </recommendedName>
</protein>
<name>TMCC3_MOUSE</name>
<sequence length="477" mass="53722">MPGSDTALTVDRTYSDPGRHHRCKSRVDRHDMNTLSLPLNIRRGGSDTNLNFDVPDGILDFHKVKLNADSLRQKILKVTEQIKIEQTSRDGNVAEYLKLVSSADKQQAGRIKQVFEKKNQKSAHSIAQLQKKLEQYHRKLREIEQNGVTRSSKDISKDSLKEIHHSLKDAHVKSRTAPHCLESSKSSMPGVSLTPPVFVFNKSREFANLIRNKFGSADNIAHLKNSLEEFRPEASPRAYGGSATIVNKPKYGSDDECSSGTSGSADSNGNQSFGAGGTSTLDSQGKIAKIMEELREIKVTQTQLAEDIEALKVQFKREYGFISQTLQEERYRYERLEDQLHDLTELHQHETANLKQELASAEEKVAYQAYERSRDIQEALESCQTRISKLELHQQEQQTLQTDAVNAKVLLGKCINVVLAFMTVILVCVSTLAKFVSPMMKSRSHILGTFFAVTLLAIFCKNWDHILCAIERIIIPR</sequence>
<gene>
    <name evidence="7" type="primary">Tmcc3</name>
</gene>
<evidence type="ECO:0000250" key="1">
    <source>
        <dbReference type="UniProtKB" id="Q9ULS5"/>
    </source>
</evidence>
<evidence type="ECO:0000255" key="2"/>
<evidence type="ECO:0000256" key="3">
    <source>
        <dbReference type="SAM" id="MobiDB-lite"/>
    </source>
</evidence>
<evidence type="ECO:0000269" key="4">
    <source>
    </source>
</evidence>
<evidence type="ECO:0000303" key="5">
    <source>
    </source>
</evidence>
<evidence type="ECO:0000305" key="6"/>
<evidence type="ECO:0000312" key="7">
    <source>
        <dbReference type="MGI" id="MGI:2442900"/>
    </source>
</evidence>
<evidence type="ECO:0007744" key="8">
    <source>
    </source>
</evidence>
<proteinExistence type="evidence at protein level"/>
<comment type="subunit">
    <text evidence="1">May form homodimers and heterodimers with TMCC2 or TMCC3 via the coiled-coil domains. Interacts with ribosomal proteins RPL4 and RPS6.</text>
</comment>
<comment type="subcellular location">
    <subcellularLocation>
        <location evidence="1">Endoplasmic reticulum membrane</location>
        <topology evidence="2">Multi-pass membrane protein</topology>
    </subcellularLocation>
    <text evidence="1">Concentrates in discrete patches along peripheral endoplasmic reticulum tubules.</text>
</comment>
<comment type="alternative products">
    <event type="alternative splicing"/>
    <isoform>
        <id>Q8R310-1</id>
        <name>1</name>
        <sequence type="displayed"/>
    </isoform>
    <isoform>
        <id>Q8R310-2</id>
        <name>2</name>
        <sequence type="described" ref="VSP_025999"/>
    </isoform>
</comment>
<comment type="developmental stage">
    <text evidence="4">At 12.5 dpc, weak expression in the developing lung and hindbrain, high expression in the tongue mesenchyme (PubMed:27697108). At 14.5 dpc, expressed in the trigeminal ganglion, oral epithelium and hindbrain (PubMed:27697108). Also detected in lung, kidney and somites (PubMed:27697108).</text>
</comment>
<comment type="similarity">
    <text evidence="6">Belongs to the TEX28 family.</text>
</comment>
<organism>
    <name type="scientific">Mus musculus</name>
    <name type="common">Mouse</name>
    <dbReference type="NCBI Taxonomy" id="10090"/>
    <lineage>
        <taxon>Eukaryota</taxon>
        <taxon>Metazoa</taxon>
        <taxon>Chordata</taxon>
        <taxon>Craniata</taxon>
        <taxon>Vertebrata</taxon>
        <taxon>Euteleostomi</taxon>
        <taxon>Mammalia</taxon>
        <taxon>Eutheria</taxon>
        <taxon>Euarchontoglires</taxon>
        <taxon>Glires</taxon>
        <taxon>Rodentia</taxon>
        <taxon>Myomorpha</taxon>
        <taxon>Muroidea</taxon>
        <taxon>Muridae</taxon>
        <taxon>Murinae</taxon>
        <taxon>Mus</taxon>
        <taxon>Mus</taxon>
    </lineage>
</organism>
<accession>Q8R310</accession>
<accession>Q501N6</accession>
<feature type="chain" id="PRO_0000184600" description="Transmembrane and coiled-coil domain protein 3">
    <location>
        <begin position="1"/>
        <end position="477"/>
    </location>
</feature>
<feature type="transmembrane region" description="Helical" evidence="2">
    <location>
        <begin position="409"/>
        <end position="429"/>
    </location>
</feature>
<feature type="transmembrane region" description="Helical" evidence="2">
    <location>
        <begin position="450"/>
        <end position="470"/>
    </location>
</feature>
<feature type="region of interest" description="Disordered" evidence="3">
    <location>
        <begin position="1"/>
        <end position="24"/>
    </location>
</feature>
<feature type="region of interest" description="Disordered" evidence="3">
    <location>
        <begin position="234"/>
        <end position="280"/>
    </location>
</feature>
<feature type="coiled-coil region" evidence="2">
    <location>
        <begin position="63"/>
        <end position="83"/>
    </location>
</feature>
<feature type="coiled-coil region" evidence="2">
    <location>
        <begin position="112"/>
        <end position="149"/>
    </location>
</feature>
<feature type="coiled-coil region" evidence="2">
    <location>
        <begin position="284"/>
        <end position="398"/>
    </location>
</feature>
<feature type="compositionally biased region" description="Polar residues" evidence="3">
    <location>
        <begin position="258"/>
        <end position="280"/>
    </location>
</feature>
<feature type="modified residue" description="Phosphoserine" evidence="8">
    <location>
        <position position="46"/>
    </location>
</feature>
<feature type="modified residue" description="Phosphoserine" evidence="8">
    <location>
        <position position="253"/>
    </location>
</feature>
<feature type="splice variant" id="VSP_025999" description="In isoform 2." evidence="5">
    <location>
        <begin position="1"/>
        <end position="31"/>
    </location>
</feature>